<evidence type="ECO:0000255" key="1">
    <source>
        <dbReference type="HAMAP-Rule" id="MF_00004"/>
    </source>
</evidence>
<protein>
    <recommendedName>
        <fullName evidence="1">Adenine phosphoribosyltransferase</fullName>
        <shortName evidence="1">APRT</shortName>
        <ecNumber evidence="1">2.4.2.7</ecNumber>
    </recommendedName>
</protein>
<gene>
    <name evidence="1" type="primary">apt</name>
    <name type="ordered locus">APL_0266</name>
</gene>
<feature type="chain" id="PRO_1000000252" description="Adenine phosphoribosyltransferase">
    <location>
        <begin position="1"/>
        <end position="179"/>
    </location>
</feature>
<sequence>MNQLDLIKSSIKSIPDYPKAGIIFRDITSLLEVPEAFKATVDAIVAEFKDKGITKVVGTESRGFIFGAPVALALGVPFVLVRKPKKLPRAVISQSYALEYGEDTLEIHLDSVKENDNVLMVDDLLATGGTIDATAKLIRRLGGKVEHAAFVIWLPDLGGKERLEKEGINSFTLVEFAGH</sequence>
<name>APT_ACTP2</name>
<accession>A3MYY8</accession>
<keyword id="KW-0963">Cytoplasm</keyword>
<keyword id="KW-0328">Glycosyltransferase</keyword>
<keyword id="KW-0660">Purine salvage</keyword>
<keyword id="KW-1185">Reference proteome</keyword>
<keyword id="KW-0808">Transferase</keyword>
<comment type="function">
    <text evidence="1">Catalyzes a salvage reaction resulting in the formation of AMP, that is energically less costly than de novo synthesis.</text>
</comment>
<comment type="catalytic activity">
    <reaction evidence="1">
        <text>AMP + diphosphate = 5-phospho-alpha-D-ribose 1-diphosphate + adenine</text>
        <dbReference type="Rhea" id="RHEA:16609"/>
        <dbReference type="ChEBI" id="CHEBI:16708"/>
        <dbReference type="ChEBI" id="CHEBI:33019"/>
        <dbReference type="ChEBI" id="CHEBI:58017"/>
        <dbReference type="ChEBI" id="CHEBI:456215"/>
        <dbReference type="EC" id="2.4.2.7"/>
    </reaction>
</comment>
<comment type="pathway">
    <text evidence="1">Purine metabolism; AMP biosynthesis via salvage pathway; AMP from adenine: step 1/1.</text>
</comment>
<comment type="subunit">
    <text evidence="1">Homodimer.</text>
</comment>
<comment type="subcellular location">
    <subcellularLocation>
        <location evidence="1">Cytoplasm</location>
    </subcellularLocation>
</comment>
<comment type="similarity">
    <text evidence="1">Belongs to the purine/pyrimidine phosphoribosyltransferase family.</text>
</comment>
<proteinExistence type="inferred from homology"/>
<dbReference type="EC" id="2.4.2.7" evidence="1"/>
<dbReference type="EMBL" id="CP000569">
    <property type="protein sequence ID" value="ABN73374.1"/>
    <property type="molecule type" value="Genomic_DNA"/>
</dbReference>
<dbReference type="RefSeq" id="WP_005596155.1">
    <property type="nucleotide sequence ID" value="NC_009053.1"/>
</dbReference>
<dbReference type="SMR" id="A3MYY8"/>
<dbReference type="STRING" id="416269.APL_0266"/>
<dbReference type="EnsemblBacteria" id="ABN73374">
    <property type="protein sequence ID" value="ABN73374"/>
    <property type="gene ID" value="APL_0266"/>
</dbReference>
<dbReference type="GeneID" id="48598419"/>
<dbReference type="KEGG" id="apl:APL_0266"/>
<dbReference type="eggNOG" id="COG0503">
    <property type="taxonomic scope" value="Bacteria"/>
</dbReference>
<dbReference type="HOGENOM" id="CLU_063339_3_0_6"/>
<dbReference type="UniPathway" id="UPA00588">
    <property type="reaction ID" value="UER00646"/>
</dbReference>
<dbReference type="Proteomes" id="UP000001432">
    <property type="component" value="Chromosome"/>
</dbReference>
<dbReference type="GO" id="GO:0005829">
    <property type="term" value="C:cytosol"/>
    <property type="evidence" value="ECO:0007669"/>
    <property type="project" value="TreeGrafter"/>
</dbReference>
<dbReference type="GO" id="GO:0003999">
    <property type="term" value="F:adenine phosphoribosyltransferase activity"/>
    <property type="evidence" value="ECO:0007669"/>
    <property type="project" value="UniProtKB-UniRule"/>
</dbReference>
<dbReference type="GO" id="GO:0006168">
    <property type="term" value="P:adenine salvage"/>
    <property type="evidence" value="ECO:0007669"/>
    <property type="project" value="InterPro"/>
</dbReference>
<dbReference type="GO" id="GO:0044209">
    <property type="term" value="P:AMP salvage"/>
    <property type="evidence" value="ECO:0007669"/>
    <property type="project" value="UniProtKB-UniRule"/>
</dbReference>
<dbReference type="GO" id="GO:0006166">
    <property type="term" value="P:purine ribonucleoside salvage"/>
    <property type="evidence" value="ECO:0007669"/>
    <property type="project" value="UniProtKB-KW"/>
</dbReference>
<dbReference type="CDD" id="cd06223">
    <property type="entry name" value="PRTases_typeI"/>
    <property type="match status" value="1"/>
</dbReference>
<dbReference type="FunFam" id="3.40.50.2020:FF:000004">
    <property type="entry name" value="Adenine phosphoribosyltransferase"/>
    <property type="match status" value="1"/>
</dbReference>
<dbReference type="Gene3D" id="3.40.50.2020">
    <property type="match status" value="1"/>
</dbReference>
<dbReference type="HAMAP" id="MF_00004">
    <property type="entry name" value="Aden_phosphoribosyltr"/>
    <property type="match status" value="1"/>
</dbReference>
<dbReference type="InterPro" id="IPR005764">
    <property type="entry name" value="Ade_phspho_trans"/>
</dbReference>
<dbReference type="InterPro" id="IPR050120">
    <property type="entry name" value="Adenine_PRTase"/>
</dbReference>
<dbReference type="InterPro" id="IPR000836">
    <property type="entry name" value="PRibTrfase_dom"/>
</dbReference>
<dbReference type="InterPro" id="IPR029057">
    <property type="entry name" value="PRTase-like"/>
</dbReference>
<dbReference type="NCBIfam" id="TIGR01090">
    <property type="entry name" value="apt"/>
    <property type="match status" value="1"/>
</dbReference>
<dbReference type="NCBIfam" id="NF002632">
    <property type="entry name" value="PRK02304.1-1"/>
    <property type="match status" value="1"/>
</dbReference>
<dbReference type="NCBIfam" id="NF002634">
    <property type="entry name" value="PRK02304.1-3"/>
    <property type="match status" value="1"/>
</dbReference>
<dbReference type="NCBIfam" id="NF002636">
    <property type="entry name" value="PRK02304.1-5"/>
    <property type="match status" value="1"/>
</dbReference>
<dbReference type="PANTHER" id="PTHR11776">
    <property type="entry name" value="ADENINE PHOSPHORIBOSYLTRANSFERASE"/>
    <property type="match status" value="1"/>
</dbReference>
<dbReference type="PANTHER" id="PTHR11776:SF7">
    <property type="entry name" value="PHOSPHORIBOSYLTRANSFERASE DOMAIN-CONTAINING PROTEIN"/>
    <property type="match status" value="1"/>
</dbReference>
<dbReference type="Pfam" id="PF00156">
    <property type="entry name" value="Pribosyltran"/>
    <property type="match status" value="1"/>
</dbReference>
<dbReference type="SUPFAM" id="SSF53271">
    <property type="entry name" value="PRTase-like"/>
    <property type="match status" value="1"/>
</dbReference>
<dbReference type="PROSITE" id="PS00103">
    <property type="entry name" value="PUR_PYR_PR_TRANSFER"/>
    <property type="match status" value="1"/>
</dbReference>
<organism>
    <name type="scientific">Actinobacillus pleuropneumoniae serotype 5b (strain L20)</name>
    <dbReference type="NCBI Taxonomy" id="416269"/>
    <lineage>
        <taxon>Bacteria</taxon>
        <taxon>Pseudomonadati</taxon>
        <taxon>Pseudomonadota</taxon>
        <taxon>Gammaproteobacteria</taxon>
        <taxon>Pasteurellales</taxon>
        <taxon>Pasteurellaceae</taxon>
        <taxon>Actinobacillus</taxon>
    </lineage>
</organism>
<reference key="1">
    <citation type="journal article" date="2008" name="J. Bacteriol.">
        <title>The complete genome sequence of Actinobacillus pleuropneumoniae L20 (serotype 5b).</title>
        <authorList>
            <person name="Foote S.J."/>
            <person name="Bosse J.T."/>
            <person name="Bouevitch A.B."/>
            <person name="Langford P.R."/>
            <person name="Young N.M."/>
            <person name="Nash J.H.E."/>
        </authorList>
    </citation>
    <scope>NUCLEOTIDE SEQUENCE [LARGE SCALE GENOMIC DNA]</scope>
    <source>
        <strain>L20</strain>
    </source>
</reference>